<gene>
    <name evidence="2" type="primary">infB</name>
    <name type="ordered locus">Ldb1332</name>
</gene>
<organism>
    <name type="scientific">Lactobacillus delbrueckii subsp. bulgaricus (strain ATCC 11842 / DSM 20081 / BCRC 10696 / JCM 1002 / NBRC 13953 / NCIMB 11778 / NCTC 12712 / WDCM 00102 / Lb 14)</name>
    <dbReference type="NCBI Taxonomy" id="390333"/>
    <lineage>
        <taxon>Bacteria</taxon>
        <taxon>Bacillati</taxon>
        <taxon>Bacillota</taxon>
        <taxon>Bacilli</taxon>
        <taxon>Lactobacillales</taxon>
        <taxon>Lactobacillaceae</taxon>
        <taxon>Lactobacillus</taxon>
    </lineage>
</organism>
<protein>
    <recommendedName>
        <fullName evidence="2">Translation initiation factor IF-2</fullName>
    </recommendedName>
</protein>
<reference key="1">
    <citation type="journal article" date="2006" name="Proc. Natl. Acad. Sci. U.S.A.">
        <title>The complete genome sequence of Lactobacillus bulgaricus reveals extensive and ongoing reductive evolution.</title>
        <authorList>
            <person name="van de Guchte M."/>
            <person name="Penaud S."/>
            <person name="Grimaldi C."/>
            <person name="Barbe V."/>
            <person name="Bryson K."/>
            <person name="Nicolas P."/>
            <person name="Robert C."/>
            <person name="Oztas S."/>
            <person name="Mangenot S."/>
            <person name="Couloux A."/>
            <person name="Loux V."/>
            <person name="Dervyn R."/>
            <person name="Bossy R."/>
            <person name="Bolotin A."/>
            <person name="Batto J.-M."/>
            <person name="Walunas T."/>
            <person name="Gibrat J.-F."/>
            <person name="Bessieres P."/>
            <person name="Weissenbach J."/>
            <person name="Ehrlich S.D."/>
            <person name="Maguin E."/>
        </authorList>
    </citation>
    <scope>NUCLEOTIDE SEQUENCE [LARGE SCALE GENOMIC DNA]</scope>
    <source>
        <strain>ATCC 11842 / DSM 20081 / BCRC 10696 / JCM 1002 / NBRC 13953 / NCIMB 11778 / NCTC 12712 / WDCM 00102 / Lb 14</strain>
    </source>
</reference>
<dbReference type="EMBL" id="CR954253">
    <property type="protein sequence ID" value="CAI98133.1"/>
    <property type="molecule type" value="Genomic_DNA"/>
</dbReference>
<dbReference type="RefSeq" id="WP_011544002.1">
    <property type="nucleotide sequence ID" value="NC_008054.1"/>
</dbReference>
<dbReference type="SMR" id="Q1G9P9"/>
<dbReference type="STRING" id="390333.Ldb1332"/>
<dbReference type="KEGG" id="ldb:Ldb1332"/>
<dbReference type="PATRIC" id="fig|390333.13.peg.1699"/>
<dbReference type="eggNOG" id="COG0532">
    <property type="taxonomic scope" value="Bacteria"/>
</dbReference>
<dbReference type="HOGENOM" id="CLU_006301_5_0_9"/>
<dbReference type="BioCyc" id="LDEL390333:LDB_RS05695-MONOMER"/>
<dbReference type="Proteomes" id="UP000001259">
    <property type="component" value="Chromosome"/>
</dbReference>
<dbReference type="GO" id="GO:0005829">
    <property type="term" value="C:cytosol"/>
    <property type="evidence" value="ECO:0007669"/>
    <property type="project" value="TreeGrafter"/>
</dbReference>
<dbReference type="GO" id="GO:0005525">
    <property type="term" value="F:GTP binding"/>
    <property type="evidence" value="ECO:0007669"/>
    <property type="project" value="UniProtKB-KW"/>
</dbReference>
<dbReference type="GO" id="GO:0003924">
    <property type="term" value="F:GTPase activity"/>
    <property type="evidence" value="ECO:0007669"/>
    <property type="project" value="UniProtKB-UniRule"/>
</dbReference>
<dbReference type="GO" id="GO:0003743">
    <property type="term" value="F:translation initiation factor activity"/>
    <property type="evidence" value="ECO:0007669"/>
    <property type="project" value="UniProtKB-UniRule"/>
</dbReference>
<dbReference type="CDD" id="cd01887">
    <property type="entry name" value="IF2_eIF5B"/>
    <property type="match status" value="1"/>
</dbReference>
<dbReference type="CDD" id="cd03702">
    <property type="entry name" value="IF2_mtIF2_II"/>
    <property type="match status" value="1"/>
</dbReference>
<dbReference type="CDD" id="cd03692">
    <property type="entry name" value="mtIF2_IVc"/>
    <property type="match status" value="1"/>
</dbReference>
<dbReference type="FunFam" id="2.40.30.10:FF:000007">
    <property type="entry name" value="Translation initiation factor IF-2"/>
    <property type="match status" value="1"/>
</dbReference>
<dbReference type="FunFam" id="2.40.30.10:FF:000008">
    <property type="entry name" value="Translation initiation factor IF-2"/>
    <property type="match status" value="1"/>
</dbReference>
<dbReference type="FunFam" id="3.40.50.10050:FF:000001">
    <property type="entry name" value="Translation initiation factor IF-2"/>
    <property type="match status" value="1"/>
</dbReference>
<dbReference type="FunFam" id="3.40.50.300:FF:000019">
    <property type="entry name" value="Translation initiation factor IF-2"/>
    <property type="match status" value="1"/>
</dbReference>
<dbReference type="Gene3D" id="3.40.50.300">
    <property type="entry name" value="P-loop containing nucleotide triphosphate hydrolases"/>
    <property type="match status" value="1"/>
</dbReference>
<dbReference type="Gene3D" id="2.40.30.10">
    <property type="entry name" value="Translation factors"/>
    <property type="match status" value="2"/>
</dbReference>
<dbReference type="Gene3D" id="3.40.50.10050">
    <property type="entry name" value="Translation initiation factor IF- 2, domain 3"/>
    <property type="match status" value="1"/>
</dbReference>
<dbReference type="HAMAP" id="MF_00100_B">
    <property type="entry name" value="IF_2_B"/>
    <property type="match status" value="1"/>
</dbReference>
<dbReference type="InterPro" id="IPR053905">
    <property type="entry name" value="EF-G-like_DII"/>
</dbReference>
<dbReference type="InterPro" id="IPR044145">
    <property type="entry name" value="IF2_II"/>
</dbReference>
<dbReference type="InterPro" id="IPR006847">
    <property type="entry name" value="IF2_N"/>
</dbReference>
<dbReference type="InterPro" id="IPR027417">
    <property type="entry name" value="P-loop_NTPase"/>
</dbReference>
<dbReference type="InterPro" id="IPR005225">
    <property type="entry name" value="Small_GTP-bd"/>
</dbReference>
<dbReference type="InterPro" id="IPR000795">
    <property type="entry name" value="T_Tr_GTP-bd_dom"/>
</dbReference>
<dbReference type="InterPro" id="IPR000178">
    <property type="entry name" value="TF_IF2_bacterial-like"/>
</dbReference>
<dbReference type="InterPro" id="IPR015760">
    <property type="entry name" value="TIF_IF2"/>
</dbReference>
<dbReference type="InterPro" id="IPR023115">
    <property type="entry name" value="TIF_IF2_dom3"/>
</dbReference>
<dbReference type="InterPro" id="IPR036925">
    <property type="entry name" value="TIF_IF2_dom3_sf"/>
</dbReference>
<dbReference type="InterPro" id="IPR009000">
    <property type="entry name" value="Transl_B-barrel_sf"/>
</dbReference>
<dbReference type="NCBIfam" id="TIGR00487">
    <property type="entry name" value="IF-2"/>
    <property type="match status" value="1"/>
</dbReference>
<dbReference type="NCBIfam" id="TIGR00231">
    <property type="entry name" value="small_GTP"/>
    <property type="match status" value="1"/>
</dbReference>
<dbReference type="PANTHER" id="PTHR43381:SF5">
    <property type="entry name" value="TR-TYPE G DOMAIN-CONTAINING PROTEIN"/>
    <property type="match status" value="1"/>
</dbReference>
<dbReference type="PANTHER" id="PTHR43381">
    <property type="entry name" value="TRANSLATION INITIATION FACTOR IF-2-RELATED"/>
    <property type="match status" value="1"/>
</dbReference>
<dbReference type="Pfam" id="PF22042">
    <property type="entry name" value="EF-G_D2"/>
    <property type="match status" value="1"/>
</dbReference>
<dbReference type="Pfam" id="PF00009">
    <property type="entry name" value="GTP_EFTU"/>
    <property type="match status" value="1"/>
</dbReference>
<dbReference type="Pfam" id="PF11987">
    <property type="entry name" value="IF-2"/>
    <property type="match status" value="1"/>
</dbReference>
<dbReference type="Pfam" id="PF04760">
    <property type="entry name" value="IF2_N"/>
    <property type="match status" value="1"/>
</dbReference>
<dbReference type="SUPFAM" id="SSF52156">
    <property type="entry name" value="Initiation factor IF2/eIF5b, domain 3"/>
    <property type="match status" value="1"/>
</dbReference>
<dbReference type="SUPFAM" id="SSF52540">
    <property type="entry name" value="P-loop containing nucleoside triphosphate hydrolases"/>
    <property type="match status" value="1"/>
</dbReference>
<dbReference type="SUPFAM" id="SSF50447">
    <property type="entry name" value="Translation proteins"/>
    <property type="match status" value="2"/>
</dbReference>
<dbReference type="PROSITE" id="PS51722">
    <property type="entry name" value="G_TR_2"/>
    <property type="match status" value="1"/>
</dbReference>
<dbReference type="PROSITE" id="PS01176">
    <property type="entry name" value="IF2"/>
    <property type="match status" value="1"/>
</dbReference>
<comment type="function">
    <text evidence="2">One of the essential components for the initiation of protein synthesis. Protects formylmethionyl-tRNA from spontaneous hydrolysis and promotes its binding to the 30S ribosomal subunits. Also involved in the hydrolysis of GTP during the formation of the 70S ribosomal complex.</text>
</comment>
<comment type="subcellular location">
    <subcellularLocation>
        <location evidence="2">Cytoplasm</location>
    </subcellularLocation>
</comment>
<comment type="similarity">
    <text evidence="2">Belongs to the TRAFAC class translation factor GTPase superfamily. Classic translation factor GTPase family. IF-2 subfamily.</text>
</comment>
<evidence type="ECO:0000250" key="1"/>
<evidence type="ECO:0000255" key="2">
    <source>
        <dbReference type="HAMAP-Rule" id="MF_00100"/>
    </source>
</evidence>
<evidence type="ECO:0000256" key="3">
    <source>
        <dbReference type="SAM" id="MobiDB-lite"/>
    </source>
</evidence>
<name>IF2_LACDA</name>
<accession>Q1G9P9</accession>
<proteinExistence type="inferred from homology"/>
<keyword id="KW-0963">Cytoplasm</keyword>
<keyword id="KW-0342">GTP-binding</keyword>
<keyword id="KW-0396">Initiation factor</keyword>
<keyword id="KW-0547">Nucleotide-binding</keyword>
<keyword id="KW-0648">Protein biosynthesis</keyword>
<keyword id="KW-1185">Reference proteome</keyword>
<sequence>MTKKQENETSKELGMDNKKTSGKSGKLKISVSAIRKGEKKTEGKRSNTRRRANNHSNDHSKRRRPAAQDLLKDLKQKQRADEARLDQESKAAKQEYKKSLNKAEASESKPVVKKVESVEKPAETAAEAPKVRGPKILKPSPARLKQNQANSEKPAAKPSSSRRPSSRPSFTEAPMPENKEGRRRKSGKPGRKGQNSYADQGRGANSNRSEQRKRKNKKHQSAPQVKKQVTQRKDRPLPESFEYEVGMNAQDLGKILHREPAEIVKKLFMLGIMINQNLSLDKDTIELLAADYGIEAVEKVHEDISDIDNIFAQEMEESKNSENQVVRPPVVTIMGHVDHGKTTLLDRLRHTRVSEHEAGGITQNIGAYQVRINDRLITFLDTPGHAAFSSMRARGAEITDIVVLIVAADDGVMPQTIEAIDHAKSAGVPIIVAINKMDRPGANPAHVTEQLMQYELIPENYGGSTIFVNISAKTGMGIDELLENIILEADMLELKADPKQKAIGTVVEARLSRGKGPVADVLIQQGTLRVGDPIVVGDTFGRVRTMTNDKGHQVKKATPSMPVEITGLNDVPESADKLVVFADEKTARAVGEARAQQSLQKQRENVQHVTLDNLFDTMKRESMKSVDIVLKADVQGSAEALAQSFQKIDVEGVRVNIIHSGVGAINESDVTLASASNALIIGFNVRPTATAKSQAAQEGVDIRLYSIIYKAIDDVKAAMQGMLEPTYEEKVIGNLTVRETWKVSKIGTIAGAFVDNGYVTRESGIRVIRDGVVKYDGKVASLRRFKDDVKEVKAGFDCGLTIENFNDIKEGDELEAYEMQEVKPS</sequence>
<feature type="chain" id="PRO_1000008260" description="Translation initiation factor IF-2">
    <location>
        <begin position="1"/>
        <end position="825"/>
    </location>
</feature>
<feature type="domain" description="tr-type G">
    <location>
        <begin position="326"/>
        <end position="495"/>
    </location>
</feature>
<feature type="region of interest" description="Disordered" evidence="3">
    <location>
        <begin position="1"/>
        <end position="239"/>
    </location>
</feature>
<feature type="region of interest" description="G1" evidence="1">
    <location>
        <begin position="335"/>
        <end position="342"/>
    </location>
</feature>
<feature type="region of interest" description="G2" evidence="1">
    <location>
        <begin position="360"/>
        <end position="364"/>
    </location>
</feature>
<feature type="region of interest" description="G3" evidence="1">
    <location>
        <begin position="381"/>
        <end position="384"/>
    </location>
</feature>
<feature type="region of interest" description="G4" evidence="1">
    <location>
        <begin position="435"/>
        <end position="438"/>
    </location>
</feature>
<feature type="region of interest" description="G5" evidence="1">
    <location>
        <begin position="471"/>
        <end position="473"/>
    </location>
</feature>
<feature type="compositionally biased region" description="Basic and acidic residues" evidence="3">
    <location>
        <begin position="1"/>
        <end position="19"/>
    </location>
</feature>
<feature type="compositionally biased region" description="Basic and acidic residues" evidence="3">
    <location>
        <begin position="35"/>
        <end position="45"/>
    </location>
</feature>
<feature type="compositionally biased region" description="Basic and acidic residues" evidence="3">
    <location>
        <begin position="70"/>
        <end position="98"/>
    </location>
</feature>
<feature type="compositionally biased region" description="Basic and acidic residues" evidence="3">
    <location>
        <begin position="113"/>
        <end position="122"/>
    </location>
</feature>
<feature type="compositionally biased region" description="Low complexity" evidence="3">
    <location>
        <begin position="158"/>
        <end position="169"/>
    </location>
</feature>
<feature type="compositionally biased region" description="Basic residues" evidence="3">
    <location>
        <begin position="181"/>
        <end position="191"/>
    </location>
</feature>
<feature type="compositionally biased region" description="Polar residues" evidence="3">
    <location>
        <begin position="194"/>
        <end position="208"/>
    </location>
</feature>
<feature type="compositionally biased region" description="Basic residues" evidence="3">
    <location>
        <begin position="211"/>
        <end position="220"/>
    </location>
</feature>
<feature type="binding site" evidence="2">
    <location>
        <begin position="335"/>
        <end position="342"/>
    </location>
    <ligand>
        <name>GTP</name>
        <dbReference type="ChEBI" id="CHEBI:37565"/>
    </ligand>
</feature>
<feature type="binding site" evidence="2">
    <location>
        <begin position="381"/>
        <end position="385"/>
    </location>
    <ligand>
        <name>GTP</name>
        <dbReference type="ChEBI" id="CHEBI:37565"/>
    </ligand>
</feature>
<feature type="binding site" evidence="2">
    <location>
        <begin position="435"/>
        <end position="438"/>
    </location>
    <ligand>
        <name>GTP</name>
        <dbReference type="ChEBI" id="CHEBI:37565"/>
    </ligand>
</feature>